<gene>
    <name evidence="1" type="primary">pepA</name>
    <name type="ordered locus">LIC_10733</name>
</gene>
<protein>
    <recommendedName>
        <fullName evidence="1">Probable cytosol aminopeptidase</fullName>
        <ecNumber evidence="1">3.4.11.1</ecNumber>
    </recommendedName>
    <alternativeName>
        <fullName evidence="1">Leucine aminopeptidase</fullName>
        <shortName evidence="1">LAP</shortName>
        <ecNumber evidence="1">3.4.11.10</ecNumber>
    </alternativeName>
    <alternativeName>
        <fullName evidence="1">Leucyl aminopeptidase</fullName>
    </alternativeName>
</protein>
<sequence>MKLDKNKIQISIGKNPSKTFYKLQLLLKDHFPENLKTKFSFQTASGIFTGENGQIFTDEVEKIIYLGLGETSKIKIRGVAQHFFQFGEKLKKWEGVGLEIHLPKVLTNSLSADLVVYQIVNSLEQGAYAINVLAKEYKENSKKIGNVSFILQDAAKLKEAEKGLKRGKIVSRYINGVRHIAHLPANHFTPEEFVSRSKEIAKDNGLKITVFDEPQLKKEKMGGILSVCEGSDKKAKMILLEYTPVKPITKKKLAIIGKGLTFDSGGISIKPAQDMHEMKYDMCGAATAIHAIGAIAELGLGVPVIAAIGVAENMPDAAAIKPGDVYTAYNGITVEVQNTDAEGRLVLGDVLSYVGKKFKPDYMLDLATLTGAIIISLGHEAAGVMSNSDVLTNLLKEASISSDERIWEMPLWEEYSEDLKSDIADIRNVAGRAGGSLSAAKFLERFVEPGIAWAHIDIAGTAWRKKTSGTQIGNGPTGYGVRLLVDLVEKIGKKK</sequence>
<accession>Q72UC6</accession>
<comment type="function">
    <text evidence="1">Presumably involved in the processing and regular turnover of intracellular proteins. Catalyzes the removal of unsubstituted N-terminal amino acids from various peptides.</text>
</comment>
<comment type="catalytic activity">
    <reaction evidence="1">
        <text>Release of an N-terminal amino acid, Xaa-|-Yaa-, in which Xaa is preferably Leu, but may be other amino acids including Pro although not Arg or Lys, and Yaa may be Pro. Amino acid amides and methyl esters are also readily hydrolyzed, but rates on arylamides are exceedingly low.</text>
        <dbReference type="EC" id="3.4.11.1"/>
    </reaction>
</comment>
<comment type="catalytic activity">
    <reaction evidence="1">
        <text>Release of an N-terminal amino acid, preferentially leucine, but not glutamic or aspartic acids.</text>
        <dbReference type="EC" id="3.4.11.10"/>
    </reaction>
</comment>
<comment type="cofactor">
    <cofactor evidence="1">
        <name>Mn(2+)</name>
        <dbReference type="ChEBI" id="CHEBI:29035"/>
    </cofactor>
    <text evidence="1">Binds 2 manganese ions per subunit.</text>
</comment>
<comment type="subcellular location">
    <subcellularLocation>
        <location evidence="1">Cytoplasm</location>
    </subcellularLocation>
</comment>
<comment type="similarity">
    <text evidence="1">Belongs to the peptidase M17 family.</text>
</comment>
<dbReference type="EC" id="3.4.11.1" evidence="1"/>
<dbReference type="EC" id="3.4.11.10" evidence="1"/>
<dbReference type="EMBL" id="AE016823">
    <property type="protein sequence ID" value="AAS69352.1"/>
    <property type="molecule type" value="Genomic_DNA"/>
</dbReference>
<dbReference type="RefSeq" id="WP_000762682.1">
    <property type="nucleotide sequence ID" value="NC_005823.1"/>
</dbReference>
<dbReference type="SMR" id="Q72UC6"/>
<dbReference type="KEGG" id="lic:LIC_10733"/>
<dbReference type="HOGENOM" id="CLU_013734_0_1_12"/>
<dbReference type="Proteomes" id="UP000007037">
    <property type="component" value="Chromosome I"/>
</dbReference>
<dbReference type="GO" id="GO:0005737">
    <property type="term" value="C:cytoplasm"/>
    <property type="evidence" value="ECO:0007669"/>
    <property type="project" value="UniProtKB-SubCell"/>
</dbReference>
<dbReference type="GO" id="GO:0030145">
    <property type="term" value="F:manganese ion binding"/>
    <property type="evidence" value="ECO:0007669"/>
    <property type="project" value="UniProtKB-UniRule"/>
</dbReference>
<dbReference type="GO" id="GO:0070006">
    <property type="term" value="F:metalloaminopeptidase activity"/>
    <property type="evidence" value="ECO:0007669"/>
    <property type="project" value="InterPro"/>
</dbReference>
<dbReference type="GO" id="GO:0006508">
    <property type="term" value="P:proteolysis"/>
    <property type="evidence" value="ECO:0007669"/>
    <property type="project" value="UniProtKB-KW"/>
</dbReference>
<dbReference type="CDD" id="cd00433">
    <property type="entry name" value="Peptidase_M17"/>
    <property type="match status" value="1"/>
</dbReference>
<dbReference type="Gene3D" id="3.40.220.10">
    <property type="entry name" value="Leucine Aminopeptidase, subunit E, domain 1"/>
    <property type="match status" value="1"/>
</dbReference>
<dbReference type="Gene3D" id="3.40.630.10">
    <property type="entry name" value="Zn peptidases"/>
    <property type="match status" value="1"/>
</dbReference>
<dbReference type="HAMAP" id="MF_00181">
    <property type="entry name" value="Cytosol_peptidase_M17"/>
    <property type="match status" value="1"/>
</dbReference>
<dbReference type="InterPro" id="IPR011356">
    <property type="entry name" value="Leucine_aapep/pepB"/>
</dbReference>
<dbReference type="InterPro" id="IPR043472">
    <property type="entry name" value="Macro_dom-like"/>
</dbReference>
<dbReference type="InterPro" id="IPR000819">
    <property type="entry name" value="Peptidase_M17_C"/>
</dbReference>
<dbReference type="InterPro" id="IPR023042">
    <property type="entry name" value="Peptidase_M17_leu_NH2_pept"/>
</dbReference>
<dbReference type="PANTHER" id="PTHR11963:SF23">
    <property type="entry name" value="CYTOSOL AMINOPEPTIDASE"/>
    <property type="match status" value="1"/>
</dbReference>
<dbReference type="PANTHER" id="PTHR11963">
    <property type="entry name" value="LEUCINE AMINOPEPTIDASE-RELATED"/>
    <property type="match status" value="1"/>
</dbReference>
<dbReference type="Pfam" id="PF00883">
    <property type="entry name" value="Peptidase_M17"/>
    <property type="match status" value="1"/>
</dbReference>
<dbReference type="PRINTS" id="PR00481">
    <property type="entry name" value="LAMNOPPTDASE"/>
</dbReference>
<dbReference type="SUPFAM" id="SSF52949">
    <property type="entry name" value="Macro domain-like"/>
    <property type="match status" value="1"/>
</dbReference>
<dbReference type="SUPFAM" id="SSF53187">
    <property type="entry name" value="Zn-dependent exopeptidases"/>
    <property type="match status" value="1"/>
</dbReference>
<dbReference type="PROSITE" id="PS00631">
    <property type="entry name" value="CYTOSOL_AP"/>
    <property type="match status" value="1"/>
</dbReference>
<keyword id="KW-0031">Aminopeptidase</keyword>
<keyword id="KW-0963">Cytoplasm</keyword>
<keyword id="KW-0378">Hydrolase</keyword>
<keyword id="KW-0464">Manganese</keyword>
<keyword id="KW-0479">Metal-binding</keyword>
<keyword id="KW-0645">Protease</keyword>
<reference key="1">
    <citation type="journal article" date="2004" name="J. Bacteriol.">
        <title>Comparative genomics of two Leptospira interrogans serovars reveals novel insights into physiology and pathogenesis.</title>
        <authorList>
            <person name="Nascimento A.L.T.O."/>
            <person name="Ko A.I."/>
            <person name="Martins E.A.L."/>
            <person name="Monteiro-Vitorello C.B."/>
            <person name="Ho P.L."/>
            <person name="Haake D.A."/>
            <person name="Verjovski-Almeida S."/>
            <person name="Hartskeerl R.A."/>
            <person name="Marques M.V."/>
            <person name="Oliveira M.C."/>
            <person name="Menck C.F.M."/>
            <person name="Leite L.C.C."/>
            <person name="Carrer H."/>
            <person name="Coutinho L.L."/>
            <person name="Degrave W.M."/>
            <person name="Dellagostin O.A."/>
            <person name="El-Dorry H."/>
            <person name="Ferro E.S."/>
            <person name="Ferro M.I.T."/>
            <person name="Furlan L.R."/>
            <person name="Gamberini M."/>
            <person name="Giglioti E.A."/>
            <person name="Goes-Neto A."/>
            <person name="Goldman G.H."/>
            <person name="Goldman M.H.S."/>
            <person name="Harakava R."/>
            <person name="Jeronimo S.M.B."/>
            <person name="Junqueira-de-Azevedo I.L.M."/>
            <person name="Kimura E.T."/>
            <person name="Kuramae E.E."/>
            <person name="Lemos E.G.M."/>
            <person name="Lemos M.V.F."/>
            <person name="Marino C.L."/>
            <person name="Nunes L.R."/>
            <person name="de Oliveira R.C."/>
            <person name="Pereira G.G."/>
            <person name="Reis M.S."/>
            <person name="Schriefer A."/>
            <person name="Siqueira W.J."/>
            <person name="Sommer P."/>
            <person name="Tsai S.M."/>
            <person name="Simpson A.J.G."/>
            <person name="Ferro J.A."/>
            <person name="Camargo L.E.A."/>
            <person name="Kitajima J.P."/>
            <person name="Setubal J.C."/>
            <person name="Van Sluys M.A."/>
        </authorList>
    </citation>
    <scope>NUCLEOTIDE SEQUENCE [LARGE SCALE GENOMIC DNA]</scope>
    <source>
        <strain>Fiocruz L1-130</strain>
    </source>
</reference>
<evidence type="ECO:0000255" key="1">
    <source>
        <dbReference type="HAMAP-Rule" id="MF_00181"/>
    </source>
</evidence>
<proteinExistence type="inferred from homology"/>
<feature type="chain" id="PRO_0000165763" description="Probable cytosol aminopeptidase">
    <location>
        <begin position="1"/>
        <end position="495"/>
    </location>
</feature>
<feature type="active site" evidence="1">
    <location>
        <position position="270"/>
    </location>
</feature>
<feature type="active site" evidence="1">
    <location>
        <position position="344"/>
    </location>
</feature>
<feature type="binding site" evidence="1">
    <location>
        <position position="258"/>
    </location>
    <ligand>
        <name>Mn(2+)</name>
        <dbReference type="ChEBI" id="CHEBI:29035"/>
        <label>2</label>
    </ligand>
</feature>
<feature type="binding site" evidence="1">
    <location>
        <position position="263"/>
    </location>
    <ligand>
        <name>Mn(2+)</name>
        <dbReference type="ChEBI" id="CHEBI:29035"/>
        <label>1</label>
    </ligand>
</feature>
<feature type="binding site" evidence="1">
    <location>
        <position position="263"/>
    </location>
    <ligand>
        <name>Mn(2+)</name>
        <dbReference type="ChEBI" id="CHEBI:29035"/>
        <label>2</label>
    </ligand>
</feature>
<feature type="binding site" evidence="1">
    <location>
        <position position="281"/>
    </location>
    <ligand>
        <name>Mn(2+)</name>
        <dbReference type="ChEBI" id="CHEBI:29035"/>
        <label>2</label>
    </ligand>
</feature>
<feature type="binding site" evidence="1">
    <location>
        <position position="340"/>
    </location>
    <ligand>
        <name>Mn(2+)</name>
        <dbReference type="ChEBI" id="CHEBI:29035"/>
        <label>1</label>
    </ligand>
</feature>
<feature type="binding site" evidence="1">
    <location>
        <position position="342"/>
    </location>
    <ligand>
        <name>Mn(2+)</name>
        <dbReference type="ChEBI" id="CHEBI:29035"/>
        <label>1</label>
    </ligand>
</feature>
<feature type="binding site" evidence="1">
    <location>
        <position position="342"/>
    </location>
    <ligand>
        <name>Mn(2+)</name>
        <dbReference type="ChEBI" id="CHEBI:29035"/>
        <label>2</label>
    </ligand>
</feature>
<organism>
    <name type="scientific">Leptospira interrogans serogroup Icterohaemorrhagiae serovar copenhageni (strain Fiocruz L1-130)</name>
    <dbReference type="NCBI Taxonomy" id="267671"/>
    <lineage>
        <taxon>Bacteria</taxon>
        <taxon>Pseudomonadati</taxon>
        <taxon>Spirochaetota</taxon>
        <taxon>Spirochaetia</taxon>
        <taxon>Leptospirales</taxon>
        <taxon>Leptospiraceae</taxon>
        <taxon>Leptospira</taxon>
    </lineage>
</organism>
<name>AMPA_LEPIC</name>